<comment type="function">
    <text evidence="4">Plays an important role in protecting the acceptor side of photosystem II (PSII) against oxidative damage, especially under iron-limiting growth conditions.</text>
</comment>
<comment type="function">
    <text evidence="1">May also be part of a periplasmic ABC transporter complex involved in iron import.</text>
</comment>
<comment type="subcellular location">
    <subcellularLocation>
        <location evidence="1">Cellular thylakoid membrane</location>
        <topology evidence="1">Peripheral membrane protein</topology>
        <orientation evidence="1">Lumenal side</orientation>
    </subcellularLocation>
</comment>
<comment type="induction">
    <text evidence="3 5">By iron limitation and to a smaller extent by manganese limitation. Regulated by IdiB. May also be indirectly regulated by DpsA and Fur.</text>
</comment>
<comment type="PTM">
    <text>Predicted to be exported by the Tat system. The position of the signal peptide cleavage has not been experimentally proven.</text>
</comment>
<comment type="similarity">
    <text evidence="6">Belongs to the bacterial solute-binding protein 1 family.</text>
</comment>
<comment type="sequence caution" evidence="6">
    <conflict type="erroneous initiation">
        <sequence resource="EMBL-CDS" id="ABB58205"/>
    </conflict>
</comment>
<accession>Q31L64</accession>
<accession>Q93IP4</accession>
<evidence type="ECO:0000250" key="1"/>
<evidence type="ECO:0000255" key="2">
    <source>
        <dbReference type="PROSITE-ProRule" id="PRU00648"/>
    </source>
</evidence>
<evidence type="ECO:0000269" key="3">
    <source>
    </source>
</evidence>
<evidence type="ECO:0000269" key="4">
    <source>
    </source>
</evidence>
<evidence type="ECO:0000269" key="5">
    <source>
    </source>
</evidence>
<evidence type="ECO:0000305" key="6"/>
<feature type="signal peptide" description="Tat-type signal" evidence="2">
    <location>
        <begin position="1"/>
        <end position="36"/>
    </location>
</feature>
<feature type="chain" id="PRO_5000067709" description="Iron deficiency-induced protein A">
    <location>
        <begin position="37"/>
        <end position="357"/>
    </location>
</feature>
<feature type="binding site" evidence="1">
    <location>
        <position position="48"/>
    </location>
    <ligand>
        <name>Fe cation</name>
        <dbReference type="ChEBI" id="CHEBI:24875"/>
    </ligand>
</feature>
<feature type="binding site" evidence="1">
    <location>
        <position position="49"/>
    </location>
    <ligand>
        <name>Fe cation</name>
        <dbReference type="ChEBI" id="CHEBI:24875"/>
    </ligand>
</feature>
<feature type="binding site" evidence="1">
    <location>
        <position position="182"/>
    </location>
    <ligand>
        <name>Fe cation</name>
        <dbReference type="ChEBI" id="CHEBI:24875"/>
    </ligand>
</feature>
<feature type="binding site" evidence="1">
    <location>
        <position position="238"/>
    </location>
    <ligand>
        <name>Fe cation</name>
        <dbReference type="ChEBI" id="CHEBI:24875"/>
    </ligand>
</feature>
<feature type="binding site" evidence="1">
    <location>
        <position position="239"/>
    </location>
    <ligand>
        <name>Fe cation</name>
        <dbReference type="ChEBI" id="CHEBI:24875"/>
    </ligand>
</feature>
<protein>
    <recommendedName>
        <fullName>Iron deficiency-induced protein A</fullName>
    </recommendedName>
</protein>
<sequence>MSESMFSRRDFLLGGTALAGTLLLDSFGDWRRRAEAAEGEVNLYSGRHYNTDNQIYREFTQKTGIKVNLIEGEADALLARLKSEGSRSPADVFITVDAGRLWQATQANLLRPLTQAQAPKLYQAVPANLRDPQGRWFALSKRARVIMYNRDRVNASQLSTYEDLANPKWRNQILVRSSSNVYNLSLTGEMIAADGAAKTEAWARGLVQNFARQPQGGDTPQILACAAGVGSLAIANTYYLVRLFKSKKAEEREAARKIKVFFPNQKGRGTHVNISGAGIVRTAPNPRAAQLLLEYLLSSQAQAVFARGNGEYPVLRGVSLDPILAGFGQFKESKISASVFGANNAQALQLMDRAGWK</sequence>
<organism>
    <name type="scientific">Synechococcus elongatus (strain ATCC 33912 / PCC 7942 / FACHB-805)</name>
    <name type="common">Anacystis nidulans R2</name>
    <dbReference type="NCBI Taxonomy" id="1140"/>
    <lineage>
        <taxon>Bacteria</taxon>
        <taxon>Bacillati</taxon>
        <taxon>Cyanobacteriota</taxon>
        <taxon>Cyanophyceae</taxon>
        <taxon>Synechococcales</taxon>
        <taxon>Synechococcaceae</taxon>
        <taxon>Synechococcus</taxon>
    </lineage>
</organism>
<keyword id="KW-0406">Ion transport</keyword>
<keyword id="KW-0408">Iron</keyword>
<keyword id="KW-0410">Iron transport</keyword>
<keyword id="KW-0472">Membrane</keyword>
<keyword id="KW-0479">Metal-binding</keyword>
<keyword id="KW-1185">Reference proteome</keyword>
<keyword id="KW-0732">Signal</keyword>
<keyword id="KW-0793">Thylakoid</keyword>
<keyword id="KW-0813">Transport</keyword>
<proteinExistence type="evidence at protein level"/>
<gene>
    <name type="primary">idiA</name>
    <name type="ordered locus">Synpcc7942_2175</name>
</gene>
<reference key="1">
    <citation type="thesis" date="2001" institute="University of Bielefeld" country="Germany">
        <authorList>
            <person name="Toelle J."/>
        </authorList>
    </citation>
    <scope>NUCLEOTIDE SEQUENCE [GENOMIC DNA]</scope>
</reference>
<reference key="2">
    <citation type="submission" date="2005-08" db="EMBL/GenBank/DDBJ databases">
        <title>Complete sequence of chromosome 1 of Synechococcus elongatus PCC 7942.</title>
        <authorList>
            <consortium name="US DOE Joint Genome Institute"/>
            <person name="Copeland A."/>
            <person name="Lucas S."/>
            <person name="Lapidus A."/>
            <person name="Barry K."/>
            <person name="Detter J.C."/>
            <person name="Glavina T."/>
            <person name="Hammon N."/>
            <person name="Israni S."/>
            <person name="Pitluck S."/>
            <person name="Schmutz J."/>
            <person name="Larimer F."/>
            <person name="Land M."/>
            <person name="Kyrpides N."/>
            <person name="Lykidis A."/>
            <person name="Golden S."/>
            <person name="Richardson P."/>
        </authorList>
    </citation>
    <scope>NUCLEOTIDE SEQUENCE [LARGE SCALE GENOMIC DNA]</scope>
    <source>
        <strain>ATCC 33912 / PCC 7942 / FACHB-805</strain>
    </source>
</reference>
<reference key="3">
    <citation type="journal article" date="1996" name="Microbiology">
        <title>IdiA, a 34 kDa protein in the cyanobacteria Synechococcus sp. strains PCC 6301 and PCC 7942, is required for growth under iron and manganese limitations.</title>
        <authorList>
            <person name="Michel K.-P."/>
            <person name="Thole H.H."/>
            <person name="Pistorius E.K."/>
        </authorList>
    </citation>
    <scope>MUTANT STUDIES</scope>
    <scope>INDUCTION</scope>
</reference>
<reference key="4">
    <citation type="journal article" date="1999" name="Microbiology">
        <title>Molecular characterization of idiA and adjacent genes in the cyanobacteria Synechococcus sp. strains PCC 6301 and PCC 7942.</title>
        <authorList>
            <person name="Michel K.-P."/>
            <person name="Krueger F."/>
            <person name="Puehler A."/>
            <person name="Pistorius E.K."/>
        </authorList>
    </citation>
    <scope>INDUCTION</scope>
    <scope>REGULATION BY IDIB AND DPSA</scope>
</reference>
<reference key="5">
    <citation type="journal article" date="2000" name="Photosyn. Res.">
        <title>The IdiA protein of Synechococcus sp. PCC 7942 functions in protecting the acceptor side of Photosystem II under oxidative stress.</title>
        <authorList>
            <person name="Exss-Sonne P."/>
            <person name="Toelle J."/>
            <person name="Bader K.P."/>
            <person name="Pistorius E.K."/>
            <person name="Michel K.-P."/>
        </authorList>
    </citation>
    <scope>FUNCTION IN PSII PROTECTION</scope>
</reference>
<reference key="6">
    <citation type="journal article" date="2001" name="J. Bacteriol.">
        <title>Unusual regulatory elements for iron deficiency induction of the idiA gene of Synechococcus elongatus PCC 7942.</title>
        <authorList>
            <person name="Michel K.-P."/>
            <person name="Pistorius E.K."/>
            <person name="Golden S.S."/>
        </authorList>
    </citation>
    <scope>REGULATION BY IDIB AND FUR</scope>
</reference>
<reference key="7">
    <citation type="journal article" date="2003" name="Arch. Microbiol.">
        <title>Comparative analysis of idiA and isiA transcription under iron starvation and oxidative stress in Synechococcus elongatus PCC 7942 wild-type and selected mutants.</title>
        <authorList>
            <person name="Yousef N."/>
            <person name="Pistorius E.K."/>
            <person name="Michel K.-P."/>
        </authorList>
    </citation>
    <scope>REGULATION BY IDIB</scope>
</reference>
<name>IDIA_SYNE7</name>
<dbReference type="EMBL" id="AJ319672">
    <property type="protein sequence ID" value="CAC40996.1"/>
    <property type="molecule type" value="Genomic_DNA"/>
</dbReference>
<dbReference type="EMBL" id="CP000100">
    <property type="protein sequence ID" value="ABB58205.1"/>
    <property type="status" value="ALT_INIT"/>
    <property type="molecule type" value="Genomic_DNA"/>
</dbReference>
<dbReference type="SMR" id="Q31L64"/>
<dbReference type="STRING" id="1140.Synpcc7942_2175"/>
<dbReference type="PaxDb" id="1140-Synpcc7942_2175"/>
<dbReference type="KEGG" id="syf:Synpcc7942_2175"/>
<dbReference type="eggNOG" id="COG1840">
    <property type="taxonomic scope" value="Bacteria"/>
</dbReference>
<dbReference type="HOGENOM" id="CLU_026974_2_1_3"/>
<dbReference type="BioCyc" id="SYNEL:SYNPCC7942_2175-MONOMER"/>
<dbReference type="Proteomes" id="UP000889800">
    <property type="component" value="Chromosome"/>
</dbReference>
<dbReference type="GO" id="GO:0030288">
    <property type="term" value="C:outer membrane-bounded periplasmic space"/>
    <property type="evidence" value="ECO:0007669"/>
    <property type="project" value="TreeGrafter"/>
</dbReference>
<dbReference type="GO" id="GO:0031676">
    <property type="term" value="C:plasma membrane-derived thylakoid membrane"/>
    <property type="evidence" value="ECO:0007669"/>
    <property type="project" value="UniProtKB-SubCell"/>
</dbReference>
<dbReference type="GO" id="GO:0046872">
    <property type="term" value="F:metal ion binding"/>
    <property type="evidence" value="ECO:0007669"/>
    <property type="project" value="UniProtKB-KW"/>
</dbReference>
<dbReference type="GO" id="GO:0006826">
    <property type="term" value="P:iron ion transport"/>
    <property type="evidence" value="ECO:0007669"/>
    <property type="project" value="UniProtKB-KW"/>
</dbReference>
<dbReference type="CDD" id="cd13542">
    <property type="entry name" value="PBP2_FutA1_ilke"/>
    <property type="match status" value="1"/>
</dbReference>
<dbReference type="Gene3D" id="3.40.190.10">
    <property type="entry name" value="Periplasmic binding protein-like II"/>
    <property type="match status" value="2"/>
</dbReference>
<dbReference type="InterPro" id="IPR026045">
    <property type="entry name" value="Ferric-bd"/>
</dbReference>
<dbReference type="InterPro" id="IPR006311">
    <property type="entry name" value="TAT_signal"/>
</dbReference>
<dbReference type="PANTHER" id="PTHR30006:SF15">
    <property type="entry name" value="IRON-UTILIZATION PERIPLASMIC PROTEIN"/>
    <property type="match status" value="1"/>
</dbReference>
<dbReference type="PANTHER" id="PTHR30006">
    <property type="entry name" value="THIAMINE-BINDING PERIPLASMIC PROTEIN-RELATED"/>
    <property type="match status" value="1"/>
</dbReference>
<dbReference type="Pfam" id="PF13343">
    <property type="entry name" value="SBP_bac_6"/>
    <property type="match status" value="1"/>
</dbReference>
<dbReference type="PIRSF" id="PIRSF002825">
    <property type="entry name" value="CfbpA"/>
    <property type="match status" value="1"/>
</dbReference>
<dbReference type="SUPFAM" id="SSF53850">
    <property type="entry name" value="Periplasmic binding protein-like II"/>
    <property type="match status" value="1"/>
</dbReference>
<dbReference type="PROSITE" id="PS51318">
    <property type="entry name" value="TAT"/>
    <property type="match status" value="1"/>
</dbReference>